<feature type="chain" id="PRO_1000120879" description="NAD kinase">
    <location>
        <begin position="1"/>
        <end position="296"/>
    </location>
</feature>
<feature type="active site" description="Proton acceptor" evidence="1">
    <location>
        <position position="72"/>
    </location>
</feature>
<feature type="binding site" evidence="1">
    <location>
        <begin position="72"/>
        <end position="73"/>
    </location>
    <ligand>
        <name>NAD(+)</name>
        <dbReference type="ChEBI" id="CHEBI:57540"/>
    </ligand>
</feature>
<feature type="binding site" evidence="1">
    <location>
        <begin position="146"/>
        <end position="147"/>
    </location>
    <ligand>
        <name>NAD(+)</name>
        <dbReference type="ChEBI" id="CHEBI:57540"/>
    </ligand>
</feature>
<feature type="binding site" evidence="1">
    <location>
        <position position="157"/>
    </location>
    <ligand>
        <name>NAD(+)</name>
        <dbReference type="ChEBI" id="CHEBI:57540"/>
    </ligand>
</feature>
<feature type="binding site" evidence="1">
    <location>
        <position position="174"/>
    </location>
    <ligand>
        <name>NAD(+)</name>
        <dbReference type="ChEBI" id="CHEBI:57540"/>
    </ligand>
</feature>
<feature type="binding site" evidence="1">
    <location>
        <position position="176"/>
    </location>
    <ligand>
        <name>NAD(+)</name>
        <dbReference type="ChEBI" id="CHEBI:57540"/>
    </ligand>
</feature>
<feature type="binding site" evidence="1">
    <location>
        <begin position="187"/>
        <end position="192"/>
    </location>
    <ligand>
        <name>NAD(+)</name>
        <dbReference type="ChEBI" id="CHEBI:57540"/>
    </ligand>
</feature>
<feature type="binding site" evidence="1">
    <location>
        <position position="247"/>
    </location>
    <ligand>
        <name>NAD(+)</name>
        <dbReference type="ChEBI" id="CHEBI:57540"/>
    </ligand>
</feature>
<keyword id="KW-0067">ATP-binding</keyword>
<keyword id="KW-0963">Cytoplasm</keyword>
<keyword id="KW-0418">Kinase</keyword>
<keyword id="KW-0520">NAD</keyword>
<keyword id="KW-0521">NADP</keyword>
<keyword id="KW-0547">Nucleotide-binding</keyword>
<keyword id="KW-0808">Transferase</keyword>
<dbReference type="EC" id="2.7.1.23" evidence="1"/>
<dbReference type="EMBL" id="CP000949">
    <property type="protein sequence ID" value="ACA72077.1"/>
    <property type="molecule type" value="Genomic_DNA"/>
</dbReference>
<dbReference type="SMR" id="B1J554"/>
<dbReference type="STRING" id="390235.PputW619_1572"/>
<dbReference type="KEGG" id="ppw:PputW619_1572"/>
<dbReference type="eggNOG" id="COG0061">
    <property type="taxonomic scope" value="Bacteria"/>
</dbReference>
<dbReference type="HOGENOM" id="CLU_008831_0_1_6"/>
<dbReference type="OrthoDB" id="9774737at2"/>
<dbReference type="GO" id="GO:0005737">
    <property type="term" value="C:cytoplasm"/>
    <property type="evidence" value="ECO:0007669"/>
    <property type="project" value="UniProtKB-SubCell"/>
</dbReference>
<dbReference type="GO" id="GO:0005524">
    <property type="term" value="F:ATP binding"/>
    <property type="evidence" value="ECO:0007669"/>
    <property type="project" value="UniProtKB-KW"/>
</dbReference>
<dbReference type="GO" id="GO:0046872">
    <property type="term" value="F:metal ion binding"/>
    <property type="evidence" value="ECO:0007669"/>
    <property type="project" value="UniProtKB-UniRule"/>
</dbReference>
<dbReference type="GO" id="GO:0051287">
    <property type="term" value="F:NAD binding"/>
    <property type="evidence" value="ECO:0007669"/>
    <property type="project" value="UniProtKB-ARBA"/>
</dbReference>
<dbReference type="GO" id="GO:0003951">
    <property type="term" value="F:NAD+ kinase activity"/>
    <property type="evidence" value="ECO:0007669"/>
    <property type="project" value="UniProtKB-UniRule"/>
</dbReference>
<dbReference type="GO" id="GO:0019674">
    <property type="term" value="P:NAD metabolic process"/>
    <property type="evidence" value="ECO:0007669"/>
    <property type="project" value="InterPro"/>
</dbReference>
<dbReference type="GO" id="GO:0006741">
    <property type="term" value="P:NADP biosynthetic process"/>
    <property type="evidence" value="ECO:0007669"/>
    <property type="project" value="UniProtKB-UniRule"/>
</dbReference>
<dbReference type="FunFam" id="2.60.200.30:FF:000001">
    <property type="entry name" value="NAD kinase"/>
    <property type="match status" value="1"/>
</dbReference>
<dbReference type="Gene3D" id="3.40.50.10330">
    <property type="entry name" value="Probable inorganic polyphosphate/atp-NAD kinase, domain 1"/>
    <property type="match status" value="1"/>
</dbReference>
<dbReference type="Gene3D" id="2.60.200.30">
    <property type="entry name" value="Probable inorganic polyphosphate/atp-NAD kinase, domain 2"/>
    <property type="match status" value="1"/>
</dbReference>
<dbReference type="HAMAP" id="MF_00361">
    <property type="entry name" value="NAD_kinase"/>
    <property type="match status" value="1"/>
</dbReference>
<dbReference type="InterPro" id="IPR017438">
    <property type="entry name" value="ATP-NAD_kinase_N"/>
</dbReference>
<dbReference type="InterPro" id="IPR017437">
    <property type="entry name" value="ATP-NAD_kinase_PpnK-typ_C"/>
</dbReference>
<dbReference type="InterPro" id="IPR016064">
    <property type="entry name" value="NAD/diacylglycerol_kinase_sf"/>
</dbReference>
<dbReference type="InterPro" id="IPR002504">
    <property type="entry name" value="NADK"/>
</dbReference>
<dbReference type="NCBIfam" id="NF002306">
    <property type="entry name" value="PRK01231.1"/>
    <property type="match status" value="1"/>
</dbReference>
<dbReference type="PANTHER" id="PTHR20275">
    <property type="entry name" value="NAD KINASE"/>
    <property type="match status" value="1"/>
</dbReference>
<dbReference type="PANTHER" id="PTHR20275:SF0">
    <property type="entry name" value="NAD KINASE"/>
    <property type="match status" value="1"/>
</dbReference>
<dbReference type="Pfam" id="PF01513">
    <property type="entry name" value="NAD_kinase"/>
    <property type="match status" value="1"/>
</dbReference>
<dbReference type="Pfam" id="PF20143">
    <property type="entry name" value="NAD_kinase_C"/>
    <property type="match status" value="1"/>
</dbReference>
<dbReference type="SUPFAM" id="SSF111331">
    <property type="entry name" value="NAD kinase/diacylglycerol kinase-like"/>
    <property type="match status" value="1"/>
</dbReference>
<name>NADK_PSEPW</name>
<gene>
    <name evidence="1" type="primary">nadK</name>
    <name type="ordered locus">PputW619_1572</name>
</gene>
<evidence type="ECO:0000255" key="1">
    <source>
        <dbReference type="HAMAP-Rule" id="MF_00361"/>
    </source>
</evidence>
<protein>
    <recommendedName>
        <fullName evidence="1">NAD kinase</fullName>
        <ecNumber evidence="1">2.7.1.23</ecNumber>
    </recommendedName>
    <alternativeName>
        <fullName evidence="1">ATP-dependent NAD kinase</fullName>
    </alternativeName>
</protein>
<accession>B1J554</accession>
<organism>
    <name type="scientific">Pseudomonas putida (strain W619)</name>
    <dbReference type="NCBI Taxonomy" id="390235"/>
    <lineage>
        <taxon>Bacteria</taxon>
        <taxon>Pseudomonadati</taxon>
        <taxon>Pseudomonadota</taxon>
        <taxon>Gammaproteobacteria</taxon>
        <taxon>Pseudomonadales</taxon>
        <taxon>Pseudomonadaceae</taxon>
        <taxon>Pseudomonas</taxon>
    </lineage>
</organism>
<comment type="function">
    <text evidence="1">Involved in the regulation of the intracellular balance of NAD and NADP, and is a key enzyme in the biosynthesis of NADP. Catalyzes specifically the phosphorylation on 2'-hydroxyl of the adenosine moiety of NAD to yield NADP.</text>
</comment>
<comment type="catalytic activity">
    <reaction evidence="1">
        <text>NAD(+) + ATP = ADP + NADP(+) + H(+)</text>
        <dbReference type="Rhea" id="RHEA:18629"/>
        <dbReference type="ChEBI" id="CHEBI:15378"/>
        <dbReference type="ChEBI" id="CHEBI:30616"/>
        <dbReference type="ChEBI" id="CHEBI:57540"/>
        <dbReference type="ChEBI" id="CHEBI:58349"/>
        <dbReference type="ChEBI" id="CHEBI:456216"/>
        <dbReference type="EC" id="2.7.1.23"/>
    </reaction>
</comment>
<comment type="cofactor">
    <cofactor evidence="1">
        <name>a divalent metal cation</name>
        <dbReference type="ChEBI" id="CHEBI:60240"/>
    </cofactor>
</comment>
<comment type="subcellular location">
    <subcellularLocation>
        <location evidence="1">Cytoplasm</location>
    </subcellularLocation>
</comment>
<comment type="similarity">
    <text evidence="1">Belongs to the NAD kinase family.</text>
</comment>
<sequence>MEQFRNIGIIGRLGSSQVLDTIRRLKKFLLERHLHVILEDTIAEVLPGHGLQTSTRKLLGEVCDLVIVVGGDGSLLGAARALARHNIPVLGINRGNLGFLTDIRPDELEEKVAAVLDGHYLVENRFLLQAEVRRHHEAIGQGDALNDVVLHPGKSTRMIEFEIYIDGQFVCSQKADGLIVATPTGSTAYALSAGGPIMHPKLDAIVIVPMYPHTLSGRPIVVDGNSELKIVVSKDLQIYPQVSCDGQNHFTCAPGDTITVSKKPQKLRLIHPLGHNYYEVCRTKLGWGSRLGGRDD</sequence>
<proteinExistence type="inferred from homology"/>
<reference key="1">
    <citation type="submission" date="2008-02" db="EMBL/GenBank/DDBJ databases">
        <title>Complete sequence of Pseudomonas putida W619.</title>
        <authorList>
            <person name="Copeland A."/>
            <person name="Lucas S."/>
            <person name="Lapidus A."/>
            <person name="Barry K."/>
            <person name="Detter J.C."/>
            <person name="Glavina del Rio T."/>
            <person name="Dalin E."/>
            <person name="Tice H."/>
            <person name="Pitluck S."/>
            <person name="Chain P."/>
            <person name="Malfatti S."/>
            <person name="Shin M."/>
            <person name="Vergez L."/>
            <person name="Schmutz J."/>
            <person name="Larimer F."/>
            <person name="Land M."/>
            <person name="Hauser L."/>
            <person name="Kyrpides N."/>
            <person name="Kim E."/>
            <person name="Taghavi S."/>
            <person name="Vangronsveld D."/>
            <person name="van der Lelie D."/>
            <person name="Richardson P."/>
        </authorList>
    </citation>
    <scope>NUCLEOTIDE SEQUENCE [LARGE SCALE GENOMIC DNA]</scope>
    <source>
        <strain>W619</strain>
    </source>
</reference>